<accession>A7GJ55</accession>
<keyword id="KW-0687">Ribonucleoprotein</keyword>
<keyword id="KW-0689">Ribosomal protein</keyword>
<keyword id="KW-0694">RNA-binding</keyword>
<keyword id="KW-0699">rRNA-binding</keyword>
<organism>
    <name type="scientific">Clostridium botulinum (strain Langeland / NCTC 10281 / Type F)</name>
    <dbReference type="NCBI Taxonomy" id="441772"/>
    <lineage>
        <taxon>Bacteria</taxon>
        <taxon>Bacillati</taxon>
        <taxon>Bacillota</taxon>
        <taxon>Clostridia</taxon>
        <taxon>Eubacteriales</taxon>
        <taxon>Clostridiaceae</taxon>
        <taxon>Clostridium</taxon>
    </lineage>
</organism>
<name>RL15_CLOBL</name>
<proteinExistence type="inferred from homology"/>
<feature type="chain" id="PRO_1000054450" description="Large ribosomal subunit protein uL15">
    <location>
        <begin position="1"/>
        <end position="146"/>
    </location>
</feature>
<feature type="region of interest" description="Disordered" evidence="2">
    <location>
        <begin position="1"/>
        <end position="56"/>
    </location>
</feature>
<feature type="compositionally biased region" description="Gly residues" evidence="2">
    <location>
        <begin position="21"/>
        <end position="35"/>
    </location>
</feature>
<feature type="compositionally biased region" description="Gly residues" evidence="2">
    <location>
        <begin position="42"/>
        <end position="52"/>
    </location>
</feature>
<gene>
    <name evidence="1" type="primary">rplO</name>
    <name type="ordered locus">CLI_3644</name>
</gene>
<comment type="function">
    <text evidence="1">Binds to the 23S rRNA.</text>
</comment>
<comment type="subunit">
    <text evidence="1">Part of the 50S ribosomal subunit.</text>
</comment>
<comment type="similarity">
    <text evidence="1">Belongs to the universal ribosomal protein uL15 family.</text>
</comment>
<sequence>MKLHELKAAEGANKASKRVGRGTGSGLGKTSGKGQNGQNSRSGGGVRPGFEGGQMPLYRRLPKRGFKNIFAKEYAAINLDRLNCFEDGTVVTPELLVEKRVVKKVKDGVKILGNGNIEKKLTVKAAKFSKSAIEKIEAAGGKVEVI</sequence>
<evidence type="ECO:0000255" key="1">
    <source>
        <dbReference type="HAMAP-Rule" id="MF_01341"/>
    </source>
</evidence>
<evidence type="ECO:0000256" key="2">
    <source>
        <dbReference type="SAM" id="MobiDB-lite"/>
    </source>
</evidence>
<evidence type="ECO:0000305" key="3"/>
<protein>
    <recommendedName>
        <fullName evidence="1">Large ribosomal subunit protein uL15</fullName>
    </recommendedName>
    <alternativeName>
        <fullName evidence="3">50S ribosomal protein L15</fullName>
    </alternativeName>
</protein>
<reference key="1">
    <citation type="submission" date="2007-06" db="EMBL/GenBank/DDBJ databases">
        <authorList>
            <person name="Brinkac L.M."/>
            <person name="Daugherty S."/>
            <person name="Dodson R.J."/>
            <person name="Madupu R."/>
            <person name="Brown J.L."/>
            <person name="Bruce D."/>
            <person name="Detter C."/>
            <person name="Munk C."/>
            <person name="Smith L.A."/>
            <person name="Smith T.J."/>
            <person name="White O."/>
            <person name="Brettin T.S."/>
        </authorList>
    </citation>
    <scope>NUCLEOTIDE SEQUENCE [LARGE SCALE GENOMIC DNA]</scope>
    <source>
        <strain>Langeland / NCTC 10281 / Type F</strain>
    </source>
</reference>
<dbReference type="EMBL" id="CP000728">
    <property type="protein sequence ID" value="ABS39649.1"/>
    <property type="molecule type" value="Genomic_DNA"/>
</dbReference>
<dbReference type="RefSeq" id="WP_012101129.1">
    <property type="nucleotide sequence ID" value="NC_009699.1"/>
</dbReference>
<dbReference type="SMR" id="A7GJ55"/>
<dbReference type="KEGG" id="cbf:CLI_3644"/>
<dbReference type="HOGENOM" id="CLU_055188_4_2_9"/>
<dbReference type="Proteomes" id="UP000002410">
    <property type="component" value="Chromosome"/>
</dbReference>
<dbReference type="GO" id="GO:0022625">
    <property type="term" value="C:cytosolic large ribosomal subunit"/>
    <property type="evidence" value="ECO:0007669"/>
    <property type="project" value="TreeGrafter"/>
</dbReference>
<dbReference type="GO" id="GO:0019843">
    <property type="term" value="F:rRNA binding"/>
    <property type="evidence" value="ECO:0007669"/>
    <property type="project" value="UniProtKB-UniRule"/>
</dbReference>
<dbReference type="GO" id="GO:0003735">
    <property type="term" value="F:structural constituent of ribosome"/>
    <property type="evidence" value="ECO:0007669"/>
    <property type="project" value="InterPro"/>
</dbReference>
<dbReference type="GO" id="GO:0006412">
    <property type="term" value="P:translation"/>
    <property type="evidence" value="ECO:0007669"/>
    <property type="project" value="UniProtKB-UniRule"/>
</dbReference>
<dbReference type="Gene3D" id="3.100.10.10">
    <property type="match status" value="1"/>
</dbReference>
<dbReference type="HAMAP" id="MF_01341">
    <property type="entry name" value="Ribosomal_uL15"/>
    <property type="match status" value="1"/>
</dbReference>
<dbReference type="InterPro" id="IPR030878">
    <property type="entry name" value="Ribosomal_uL15"/>
</dbReference>
<dbReference type="InterPro" id="IPR021131">
    <property type="entry name" value="Ribosomal_uL15/eL18"/>
</dbReference>
<dbReference type="InterPro" id="IPR036227">
    <property type="entry name" value="Ribosomal_uL15/eL18_sf"/>
</dbReference>
<dbReference type="InterPro" id="IPR005749">
    <property type="entry name" value="Ribosomal_uL15_bac-type"/>
</dbReference>
<dbReference type="InterPro" id="IPR001196">
    <property type="entry name" value="Ribosomal_uL15_CS"/>
</dbReference>
<dbReference type="NCBIfam" id="TIGR01071">
    <property type="entry name" value="rplO_bact"/>
    <property type="match status" value="1"/>
</dbReference>
<dbReference type="PANTHER" id="PTHR12934">
    <property type="entry name" value="50S RIBOSOMAL PROTEIN L15"/>
    <property type="match status" value="1"/>
</dbReference>
<dbReference type="PANTHER" id="PTHR12934:SF11">
    <property type="entry name" value="LARGE RIBOSOMAL SUBUNIT PROTEIN UL15M"/>
    <property type="match status" value="1"/>
</dbReference>
<dbReference type="Pfam" id="PF00828">
    <property type="entry name" value="Ribosomal_L27A"/>
    <property type="match status" value="1"/>
</dbReference>
<dbReference type="SUPFAM" id="SSF52080">
    <property type="entry name" value="Ribosomal proteins L15p and L18e"/>
    <property type="match status" value="1"/>
</dbReference>
<dbReference type="PROSITE" id="PS00475">
    <property type="entry name" value="RIBOSOMAL_L15"/>
    <property type="match status" value="1"/>
</dbReference>